<gene>
    <name evidence="1" type="primary">argR</name>
    <name type="ordered locus">TT_C1194</name>
</gene>
<feature type="chain" id="PRO_0000205137" description="Arginine repressor">
    <location>
        <begin position="1"/>
        <end position="164"/>
    </location>
</feature>
<comment type="function">
    <text evidence="1">Regulates arginine biosynthesis genes.</text>
</comment>
<comment type="pathway">
    <text>Amino-acid biosynthesis; L-arginine biosynthesis [regulation].</text>
</comment>
<comment type="subcellular location">
    <subcellularLocation>
        <location evidence="1">Cytoplasm</location>
    </subcellularLocation>
</comment>
<comment type="similarity">
    <text evidence="1">Belongs to the ArgR family.</text>
</comment>
<accession>Q72ID8</accession>
<protein>
    <recommendedName>
        <fullName evidence="1">Arginine repressor</fullName>
    </recommendedName>
</protein>
<reference key="1">
    <citation type="journal article" date="2004" name="Nat. Biotechnol.">
        <title>The genome sequence of the extreme thermophile Thermus thermophilus.</title>
        <authorList>
            <person name="Henne A."/>
            <person name="Brueggemann H."/>
            <person name="Raasch C."/>
            <person name="Wiezer A."/>
            <person name="Hartsch T."/>
            <person name="Liesegang H."/>
            <person name="Johann A."/>
            <person name="Lienard T."/>
            <person name="Gohl O."/>
            <person name="Martinez-Arias R."/>
            <person name="Jacobi C."/>
            <person name="Starkuviene V."/>
            <person name="Schlenczeck S."/>
            <person name="Dencker S."/>
            <person name="Huber R."/>
            <person name="Klenk H.-P."/>
            <person name="Kramer W."/>
            <person name="Merkl R."/>
            <person name="Gottschalk G."/>
            <person name="Fritz H.-J."/>
        </authorList>
    </citation>
    <scope>NUCLEOTIDE SEQUENCE [LARGE SCALE GENOMIC DNA]</scope>
    <source>
        <strain>ATCC BAA-163 / DSM 7039 / HB27</strain>
    </source>
</reference>
<keyword id="KW-0028">Amino-acid biosynthesis</keyword>
<keyword id="KW-0055">Arginine biosynthesis</keyword>
<keyword id="KW-0963">Cytoplasm</keyword>
<keyword id="KW-0238">DNA-binding</keyword>
<keyword id="KW-0678">Repressor</keyword>
<keyword id="KW-0804">Transcription</keyword>
<keyword id="KW-0805">Transcription regulation</keyword>
<proteinExistence type="inferred from homology"/>
<dbReference type="EMBL" id="AE017221">
    <property type="protein sequence ID" value="AAS81536.1"/>
    <property type="molecule type" value="Genomic_DNA"/>
</dbReference>
<dbReference type="RefSeq" id="WP_008633181.1">
    <property type="nucleotide sequence ID" value="NC_005835.1"/>
</dbReference>
<dbReference type="SMR" id="Q72ID8"/>
<dbReference type="GeneID" id="3169312"/>
<dbReference type="KEGG" id="tth:TT_C1194"/>
<dbReference type="eggNOG" id="COG1438">
    <property type="taxonomic scope" value="Bacteria"/>
</dbReference>
<dbReference type="HOGENOM" id="CLU_097103_3_0_0"/>
<dbReference type="OrthoDB" id="9807089at2"/>
<dbReference type="UniPathway" id="UPA00068"/>
<dbReference type="Proteomes" id="UP000000592">
    <property type="component" value="Chromosome"/>
</dbReference>
<dbReference type="GO" id="GO:0005737">
    <property type="term" value="C:cytoplasm"/>
    <property type="evidence" value="ECO:0007669"/>
    <property type="project" value="UniProtKB-SubCell"/>
</dbReference>
<dbReference type="GO" id="GO:0034618">
    <property type="term" value="F:arginine binding"/>
    <property type="evidence" value="ECO:0007669"/>
    <property type="project" value="InterPro"/>
</dbReference>
<dbReference type="GO" id="GO:0003677">
    <property type="term" value="F:DNA binding"/>
    <property type="evidence" value="ECO:0007669"/>
    <property type="project" value="UniProtKB-KW"/>
</dbReference>
<dbReference type="GO" id="GO:0003700">
    <property type="term" value="F:DNA-binding transcription factor activity"/>
    <property type="evidence" value="ECO:0007669"/>
    <property type="project" value="UniProtKB-UniRule"/>
</dbReference>
<dbReference type="GO" id="GO:0006526">
    <property type="term" value="P:L-arginine biosynthetic process"/>
    <property type="evidence" value="ECO:0007669"/>
    <property type="project" value="UniProtKB-UniPathway"/>
</dbReference>
<dbReference type="GO" id="GO:0051259">
    <property type="term" value="P:protein complex oligomerization"/>
    <property type="evidence" value="ECO:0007669"/>
    <property type="project" value="InterPro"/>
</dbReference>
<dbReference type="GO" id="GO:1900079">
    <property type="term" value="P:regulation of arginine biosynthetic process"/>
    <property type="evidence" value="ECO:0007669"/>
    <property type="project" value="UniProtKB-UniRule"/>
</dbReference>
<dbReference type="Gene3D" id="3.30.1360.40">
    <property type="match status" value="1"/>
</dbReference>
<dbReference type="Gene3D" id="1.10.10.10">
    <property type="entry name" value="Winged helix-like DNA-binding domain superfamily/Winged helix DNA-binding domain"/>
    <property type="match status" value="1"/>
</dbReference>
<dbReference type="HAMAP" id="MF_00173">
    <property type="entry name" value="Arg_repressor"/>
    <property type="match status" value="1"/>
</dbReference>
<dbReference type="InterPro" id="IPR001669">
    <property type="entry name" value="Arg_repress"/>
</dbReference>
<dbReference type="InterPro" id="IPR020899">
    <property type="entry name" value="Arg_repress_C"/>
</dbReference>
<dbReference type="InterPro" id="IPR036251">
    <property type="entry name" value="Arg_repress_C_sf"/>
</dbReference>
<dbReference type="InterPro" id="IPR020900">
    <property type="entry name" value="Arg_repress_DNA-bd"/>
</dbReference>
<dbReference type="InterPro" id="IPR036388">
    <property type="entry name" value="WH-like_DNA-bd_sf"/>
</dbReference>
<dbReference type="InterPro" id="IPR036390">
    <property type="entry name" value="WH_DNA-bd_sf"/>
</dbReference>
<dbReference type="NCBIfam" id="TIGR01529">
    <property type="entry name" value="argR_whole"/>
    <property type="match status" value="1"/>
</dbReference>
<dbReference type="PANTHER" id="PTHR34471">
    <property type="entry name" value="ARGININE REPRESSOR"/>
    <property type="match status" value="1"/>
</dbReference>
<dbReference type="PANTHER" id="PTHR34471:SF1">
    <property type="entry name" value="ARGININE REPRESSOR"/>
    <property type="match status" value="1"/>
</dbReference>
<dbReference type="Pfam" id="PF01316">
    <property type="entry name" value="Arg_repressor"/>
    <property type="match status" value="1"/>
</dbReference>
<dbReference type="Pfam" id="PF02863">
    <property type="entry name" value="Arg_repressor_C"/>
    <property type="match status" value="1"/>
</dbReference>
<dbReference type="PRINTS" id="PR01467">
    <property type="entry name" value="ARGREPRESSOR"/>
</dbReference>
<dbReference type="SUPFAM" id="SSF55252">
    <property type="entry name" value="C-terminal domain of arginine repressor"/>
    <property type="match status" value="1"/>
</dbReference>
<dbReference type="SUPFAM" id="SSF46785">
    <property type="entry name" value="Winged helix' DNA-binding domain"/>
    <property type="match status" value="1"/>
</dbReference>
<sequence length="164" mass="18143">MGNKAERHRAIQEIVRREEIGTQKELVERLRQLGFEVTQATVSRDIAELGLARIALGKGRHRYVLPAADLPENAYEELKRQFGLFVRDVDRGGNLLVVKTAEGHASGIAYLLDRLRRDEIVGTLAGDDTILVVARTEEAAQALEDEFAGLLVEGRALRRALSGS</sequence>
<organism>
    <name type="scientific">Thermus thermophilus (strain ATCC BAA-163 / DSM 7039 / HB27)</name>
    <dbReference type="NCBI Taxonomy" id="262724"/>
    <lineage>
        <taxon>Bacteria</taxon>
        <taxon>Thermotogati</taxon>
        <taxon>Deinococcota</taxon>
        <taxon>Deinococci</taxon>
        <taxon>Thermales</taxon>
        <taxon>Thermaceae</taxon>
        <taxon>Thermus</taxon>
    </lineage>
</organism>
<name>ARGR_THET2</name>
<evidence type="ECO:0000255" key="1">
    <source>
        <dbReference type="HAMAP-Rule" id="MF_00173"/>
    </source>
</evidence>